<gene>
    <name evidence="1" type="primary">bamC</name>
    <name type="ordered locus">CAP2UW1_1373</name>
</gene>
<organism>
    <name type="scientific">Accumulibacter regalis</name>
    <dbReference type="NCBI Taxonomy" id="522306"/>
    <lineage>
        <taxon>Bacteria</taxon>
        <taxon>Pseudomonadati</taxon>
        <taxon>Pseudomonadota</taxon>
        <taxon>Betaproteobacteria</taxon>
        <taxon>Candidatus Accumulibacter</taxon>
    </lineage>
</organism>
<protein>
    <recommendedName>
        <fullName evidence="1">Outer membrane protein assembly factor BamC</fullName>
    </recommendedName>
</protein>
<reference key="1">
    <citation type="submission" date="2009-09" db="EMBL/GenBank/DDBJ databases">
        <title>Complete sequence of chromosome of Candidatus Accumulibacter phosphatis clade IIA str. UW-1.</title>
        <authorList>
            <consortium name="US DOE Joint Genome Institute"/>
            <person name="Martin H.G."/>
            <person name="Ivanova N."/>
            <person name="Kunin V."/>
            <person name="Warnecke F."/>
            <person name="Barry K."/>
            <person name="He S."/>
            <person name="Salamov A."/>
            <person name="Szeto E."/>
            <person name="Dalin E."/>
            <person name="Pangilinan J.L."/>
            <person name="Lapidus A."/>
            <person name="Lowry S."/>
            <person name="Kyrpides N.C."/>
            <person name="McMahon K.D."/>
            <person name="Hugenholtz P."/>
        </authorList>
    </citation>
    <scope>NUCLEOTIDE SEQUENCE [LARGE SCALE GENOMIC DNA]</scope>
    <source>
        <strain>UW-1</strain>
    </source>
</reference>
<name>BAMC_ACCRE</name>
<accession>C7RSI4</accession>
<feature type="signal peptide" evidence="1">
    <location>
        <begin position="1"/>
        <end position="23"/>
    </location>
</feature>
<feature type="chain" id="PRO_0000417818" description="Outer membrane protein assembly factor BamC">
    <location>
        <begin position="24"/>
        <end position="384"/>
    </location>
</feature>
<feature type="region of interest" description="Disordered" evidence="2">
    <location>
        <begin position="47"/>
        <end position="70"/>
    </location>
</feature>
<feature type="region of interest" description="Disordered" evidence="2">
    <location>
        <begin position="251"/>
        <end position="273"/>
    </location>
</feature>
<feature type="lipid moiety-binding region" description="N-palmitoyl cysteine" evidence="1">
    <location>
        <position position="24"/>
    </location>
</feature>
<feature type="lipid moiety-binding region" description="S-diacylglycerol cysteine" evidence="1">
    <location>
        <position position="24"/>
    </location>
</feature>
<dbReference type="EMBL" id="CP001715">
    <property type="protein sequence ID" value="ACV34697.1"/>
    <property type="molecule type" value="Genomic_DNA"/>
</dbReference>
<dbReference type="STRING" id="522306.CAP2UW1_1373"/>
<dbReference type="KEGG" id="app:CAP2UW1_1373"/>
<dbReference type="eggNOG" id="COG3317">
    <property type="taxonomic scope" value="Bacteria"/>
</dbReference>
<dbReference type="HOGENOM" id="CLU_056157_0_0_4"/>
<dbReference type="OrthoDB" id="5291099at2"/>
<dbReference type="GO" id="GO:0009279">
    <property type="term" value="C:cell outer membrane"/>
    <property type="evidence" value="ECO:0007669"/>
    <property type="project" value="UniProtKB-SubCell"/>
</dbReference>
<dbReference type="GO" id="GO:0043165">
    <property type="term" value="P:Gram-negative-bacterium-type cell outer membrane assembly"/>
    <property type="evidence" value="ECO:0007669"/>
    <property type="project" value="UniProtKB-UniRule"/>
</dbReference>
<dbReference type="GO" id="GO:0051205">
    <property type="term" value="P:protein insertion into membrane"/>
    <property type="evidence" value="ECO:0007669"/>
    <property type="project" value="UniProtKB-UniRule"/>
</dbReference>
<dbReference type="Gene3D" id="3.30.310.170">
    <property type="entry name" value="Outer membrane protein assembly factor BamC"/>
    <property type="match status" value="1"/>
</dbReference>
<dbReference type="HAMAP" id="MF_00924">
    <property type="entry name" value="OM_assembly_BamC"/>
    <property type="match status" value="1"/>
</dbReference>
<dbReference type="InterPro" id="IPR014524">
    <property type="entry name" value="BamC"/>
</dbReference>
<dbReference type="InterPro" id="IPR042268">
    <property type="entry name" value="BamC_C"/>
</dbReference>
<dbReference type="InterPro" id="IPR010653">
    <property type="entry name" value="NlpB/DapX"/>
</dbReference>
<dbReference type="Pfam" id="PF06804">
    <property type="entry name" value="Lipoprotein_18"/>
    <property type="match status" value="1"/>
</dbReference>
<dbReference type="PROSITE" id="PS51257">
    <property type="entry name" value="PROKAR_LIPOPROTEIN"/>
    <property type="match status" value="1"/>
</dbReference>
<proteinExistence type="inferred from homology"/>
<comment type="function">
    <text evidence="1">Part of the outer membrane protein assembly complex, which is involved in assembly and insertion of beta-barrel proteins into the outer membrane.</text>
</comment>
<comment type="subunit">
    <text evidence="1">Part of the Bam complex.</text>
</comment>
<comment type="subcellular location">
    <subcellularLocation>
        <location evidence="1">Cell outer membrane</location>
        <topology evidence="1">Lipid-anchor</topology>
    </subcellularLocation>
</comment>
<comment type="similarity">
    <text evidence="1">Belongs to the BamC family.</text>
</comment>
<sequence length="384" mass="42929">MNKLNSVVVARGAVAVLLIGLAGCTGSLLEPKKIEYKTASANKVPTLEVPPDLTSPTRDDRYAVPDTSGKGAATFSAYSAERSPQARAQQKSDVLPEVDTARIERSGNQRWLVASGSPDKLWGPVKDFWQETGFVIKLELPDAGVMETDWAENRAKIQQDFIRNILGKVIDSVYSTAERDKFRTRLEPGSTPGTTDIFISHRGMYEIFVTEGKDQTKWQPRPADPELEAEMLRRLMVRLGSEEKRATAAMQAAQEKPLERAKMTRGPDGSGTLEVEESFDRAWRRVGLALDRVGFTVEDRDRSRGLYFVRYVDPEIDNEKKEEGFLSKLNIFKSSSSGKPQTQYRIFVKDDASRSTVQVLTLEGGVDQSETSKRILSLLYDQLK</sequence>
<keyword id="KW-0998">Cell outer membrane</keyword>
<keyword id="KW-0449">Lipoprotein</keyword>
<keyword id="KW-0472">Membrane</keyword>
<keyword id="KW-0564">Palmitate</keyword>
<keyword id="KW-0732">Signal</keyword>
<evidence type="ECO:0000255" key="1">
    <source>
        <dbReference type="HAMAP-Rule" id="MF_00924"/>
    </source>
</evidence>
<evidence type="ECO:0000256" key="2">
    <source>
        <dbReference type="SAM" id="MobiDB-lite"/>
    </source>
</evidence>